<protein>
    <recommendedName>
        <fullName>Mitochondrial fission regulator 1-like</fullName>
    </recommendedName>
</protein>
<evidence type="ECO:0000250" key="1">
    <source>
        <dbReference type="UniProtKB" id="Q9H019"/>
    </source>
</evidence>
<evidence type="ECO:0000269" key="2">
    <source>
    </source>
</evidence>
<evidence type="ECO:0000303" key="3">
    <source>
    </source>
</evidence>
<evidence type="ECO:0000305" key="4"/>
<evidence type="ECO:0007744" key="5">
    <source>
    </source>
</evidence>
<evidence type="ECO:0007744" key="6">
    <source>
    </source>
</evidence>
<gene>
    <name type="primary">Mtfr1l</name>
    <name type="synonym">Fam54b</name>
</gene>
<accession>Q9CWE0</accession>
<accession>Q3UJK3</accession>
<accession>Q8BTP7</accession>
<comment type="function">
    <text evidence="2">Mitochondrial protein required for adaptation of miochondrial dynamics to metabolic changes. Regulates mitochondrial morphology at steady state and mediates AMPK-dependent stress-induced mitochondrial fragmentation via the control of OPA1 levels.</text>
</comment>
<comment type="subcellular location">
    <subcellularLocation>
        <location evidence="2">Mitochondrion outer membrane</location>
        <topology evidence="2">Peripheral membrane protein</topology>
        <orientation evidence="2">Cytoplasmic side</orientation>
    </subcellularLocation>
</comment>
<comment type="alternative products">
    <event type="alternative splicing"/>
    <isoform>
        <id>Q9CWE0-1</id>
        <name>1</name>
        <sequence type="displayed"/>
    </isoform>
    <isoform>
        <id>Q9CWE0-2</id>
        <name>2</name>
        <sequence type="described" ref="VSP_034340"/>
    </isoform>
</comment>
<comment type="PTM">
    <text evidence="1">Phosphorylated by AMPK. Upon stress, phosphorylation at Ser-100 and Ser-235 by AMPK is sufficient to induce mitochondrial fragmentation.</text>
</comment>
<comment type="similarity">
    <text evidence="4">Belongs to the MTFR1 family.</text>
</comment>
<reference key="1">
    <citation type="journal article" date="2005" name="Science">
        <title>The transcriptional landscape of the mammalian genome.</title>
        <authorList>
            <person name="Carninci P."/>
            <person name="Kasukawa T."/>
            <person name="Katayama S."/>
            <person name="Gough J."/>
            <person name="Frith M.C."/>
            <person name="Maeda N."/>
            <person name="Oyama R."/>
            <person name="Ravasi T."/>
            <person name="Lenhard B."/>
            <person name="Wells C."/>
            <person name="Kodzius R."/>
            <person name="Shimokawa K."/>
            <person name="Bajic V.B."/>
            <person name="Brenner S.E."/>
            <person name="Batalov S."/>
            <person name="Forrest A.R."/>
            <person name="Zavolan M."/>
            <person name="Davis M.J."/>
            <person name="Wilming L.G."/>
            <person name="Aidinis V."/>
            <person name="Allen J.E."/>
            <person name="Ambesi-Impiombato A."/>
            <person name="Apweiler R."/>
            <person name="Aturaliya R.N."/>
            <person name="Bailey T.L."/>
            <person name="Bansal M."/>
            <person name="Baxter L."/>
            <person name="Beisel K.W."/>
            <person name="Bersano T."/>
            <person name="Bono H."/>
            <person name="Chalk A.M."/>
            <person name="Chiu K.P."/>
            <person name="Choudhary V."/>
            <person name="Christoffels A."/>
            <person name="Clutterbuck D.R."/>
            <person name="Crowe M.L."/>
            <person name="Dalla E."/>
            <person name="Dalrymple B.P."/>
            <person name="de Bono B."/>
            <person name="Della Gatta G."/>
            <person name="di Bernardo D."/>
            <person name="Down T."/>
            <person name="Engstrom P."/>
            <person name="Fagiolini M."/>
            <person name="Faulkner G."/>
            <person name="Fletcher C.F."/>
            <person name="Fukushima T."/>
            <person name="Furuno M."/>
            <person name="Futaki S."/>
            <person name="Gariboldi M."/>
            <person name="Georgii-Hemming P."/>
            <person name="Gingeras T.R."/>
            <person name="Gojobori T."/>
            <person name="Green R.E."/>
            <person name="Gustincich S."/>
            <person name="Harbers M."/>
            <person name="Hayashi Y."/>
            <person name="Hensch T.K."/>
            <person name="Hirokawa N."/>
            <person name="Hill D."/>
            <person name="Huminiecki L."/>
            <person name="Iacono M."/>
            <person name="Ikeo K."/>
            <person name="Iwama A."/>
            <person name="Ishikawa T."/>
            <person name="Jakt M."/>
            <person name="Kanapin A."/>
            <person name="Katoh M."/>
            <person name="Kawasawa Y."/>
            <person name="Kelso J."/>
            <person name="Kitamura H."/>
            <person name="Kitano H."/>
            <person name="Kollias G."/>
            <person name="Krishnan S.P."/>
            <person name="Kruger A."/>
            <person name="Kummerfeld S.K."/>
            <person name="Kurochkin I.V."/>
            <person name="Lareau L.F."/>
            <person name="Lazarevic D."/>
            <person name="Lipovich L."/>
            <person name="Liu J."/>
            <person name="Liuni S."/>
            <person name="McWilliam S."/>
            <person name="Madan Babu M."/>
            <person name="Madera M."/>
            <person name="Marchionni L."/>
            <person name="Matsuda H."/>
            <person name="Matsuzawa S."/>
            <person name="Miki H."/>
            <person name="Mignone F."/>
            <person name="Miyake S."/>
            <person name="Morris K."/>
            <person name="Mottagui-Tabar S."/>
            <person name="Mulder N."/>
            <person name="Nakano N."/>
            <person name="Nakauchi H."/>
            <person name="Ng P."/>
            <person name="Nilsson R."/>
            <person name="Nishiguchi S."/>
            <person name="Nishikawa S."/>
            <person name="Nori F."/>
            <person name="Ohara O."/>
            <person name="Okazaki Y."/>
            <person name="Orlando V."/>
            <person name="Pang K.C."/>
            <person name="Pavan W.J."/>
            <person name="Pavesi G."/>
            <person name="Pesole G."/>
            <person name="Petrovsky N."/>
            <person name="Piazza S."/>
            <person name="Reed J."/>
            <person name="Reid J.F."/>
            <person name="Ring B.Z."/>
            <person name="Ringwald M."/>
            <person name="Rost B."/>
            <person name="Ruan Y."/>
            <person name="Salzberg S.L."/>
            <person name="Sandelin A."/>
            <person name="Schneider C."/>
            <person name="Schoenbach C."/>
            <person name="Sekiguchi K."/>
            <person name="Semple C.A."/>
            <person name="Seno S."/>
            <person name="Sessa L."/>
            <person name="Sheng Y."/>
            <person name="Shibata Y."/>
            <person name="Shimada H."/>
            <person name="Shimada K."/>
            <person name="Silva D."/>
            <person name="Sinclair B."/>
            <person name="Sperling S."/>
            <person name="Stupka E."/>
            <person name="Sugiura K."/>
            <person name="Sultana R."/>
            <person name="Takenaka Y."/>
            <person name="Taki K."/>
            <person name="Tammoja K."/>
            <person name="Tan S.L."/>
            <person name="Tang S."/>
            <person name="Taylor M.S."/>
            <person name="Tegner J."/>
            <person name="Teichmann S.A."/>
            <person name="Ueda H.R."/>
            <person name="van Nimwegen E."/>
            <person name="Verardo R."/>
            <person name="Wei C.L."/>
            <person name="Yagi K."/>
            <person name="Yamanishi H."/>
            <person name="Zabarovsky E."/>
            <person name="Zhu S."/>
            <person name="Zimmer A."/>
            <person name="Hide W."/>
            <person name="Bult C."/>
            <person name="Grimmond S.M."/>
            <person name="Teasdale R.D."/>
            <person name="Liu E.T."/>
            <person name="Brusic V."/>
            <person name="Quackenbush J."/>
            <person name="Wahlestedt C."/>
            <person name="Mattick J.S."/>
            <person name="Hume D.A."/>
            <person name="Kai C."/>
            <person name="Sasaki D."/>
            <person name="Tomaru Y."/>
            <person name="Fukuda S."/>
            <person name="Kanamori-Katayama M."/>
            <person name="Suzuki M."/>
            <person name="Aoki J."/>
            <person name="Arakawa T."/>
            <person name="Iida J."/>
            <person name="Imamura K."/>
            <person name="Itoh M."/>
            <person name="Kato T."/>
            <person name="Kawaji H."/>
            <person name="Kawagashira N."/>
            <person name="Kawashima T."/>
            <person name="Kojima M."/>
            <person name="Kondo S."/>
            <person name="Konno H."/>
            <person name="Nakano K."/>
            <person name="Ninomiya N."/>
            <person name="Nishio T."/>
            <person name="Okada M."/>
            <person name="Plessy C."/>
            <person name="Shibata K."/>
            <person name="Shiraki T."/>
            <person name="Suzuki S."/>
            <person name="Tagami M."/>
            <person name="Waki K."/>
            <person name="Watahiki A."/>
            <person name="Okamura-Oho Y."/>
            <person name="Suzuki H."/>
            <person name="Kawai J."/>
            <person name="Hayashizaki Y."/>
        </authorList>
    </citation>
    <scope>NUCLEOTIDE SEQUENCE [LARGE SCALE MRNA] (ISOFORMS 1 AND 2)</scope>
    <source>
        <strain>C57BL/6J</strain>
        <strain>DBA/2J</strain>
        <strain>NOD</strain>
        <tissue>Heart</tissue>
        <tissue>Olfactory bulb</tissue>
        <tissue>Spleen</tissue>
    </source>
</reference>
<reference key="2">
    <citation type="journal article" date="2004" name="Genome Res.">
        <title>The status, quality, and expansion of the NIH full-length cDNA project: the Mammalian Gene Collection (MGC).</title>
        <authorList>
            <consortium name="The MGC Project Team"/>
        </authorList>
    </citation>
    <scope>NUCLEOTIDE SEQUENCE [LARGE SCALE MRNA] (ISOFORM 1)</scope>
    <source>
        <strain>FVB/N</strain>
        <tissue>Liver</tissue>
    </source>
</reference>
<reference key="3">
    <citation type="journal article" date="2007" name="Proc. Natl. Acad. Sci. U.S.A.">
        <title>Large-scale phosphorylation analysis of mouse liver.</title>
        <authorList>
            <person name="Villen J."/>
            <person name="Beausoleil S.A."/>
            <person name="Gerber S.A."/>
            <person name="Gygi S.P."/>
        </authorList>
    </citation>
    <scope>IDENTIFICATION BY MASS SPECTROMETRY [LARGE SCALE ANALYSIS]</scope>
    <source>
        <tissue>Liver</tissue>
    </source>
</reference>
<reference key="4">
    <citation type="journal article" date="2009" name="Immunity">
        <title>The phagosomal proteome in interferon-gamma-activated macrophages.</title>
        <authorList>
            <person name="Trost M."/>
            <person name="English L."/>
            <person name="Lemieux S."/>
            <person name="Courcelles M."/>
            <person name="Desjardins M."/>
            <person name="Thibault P."/>
        </authorList>
    </citation>
    <scope>PHOSPHORYLATION [LARGE SCALE ANALYSIS] AT SER-100</scope>
    <scope>IDENTIFICATION BY MASS SPECTROMETRY [LARGE SCALE ANALYSIS]</scope>
</reference>
<reference key="5">
    <citation type="journal article" date="2009" name="Mol. Cell. Proteomics">
        <title>Large scale localization of protein phosphorylation by use of electron capture dissociation mass spectrometry.</title>
        <authorList>
            <person name="Sweet S.M."/>
            <person name="Bailey C.M."/>
            <person name="Cunningham D.L."/>
            <person name="Heath J.K."/>
            <person name="Cooper H.J."/>
        </authorList>
    </citation>
    <scope>IDENTIFICATION BY MASS SPECTROMETRY [LARGE SCALE ANALYSIS]</scope>
    <source>
        <tissue>Embryonic fibroblast</tissue>
    </source>
</reference>
<reference key="6">
    <citation type="journal article" date="2010" name="Cell">
        <title>A tissue-specific atlas of mouse protein phosphorylation and expression.</title>
        <authorList>
            <person name="Huttlin E.L."/>
            <person name="Jedrychowski M.P."/>
            <person name="Elias J.E."/>
            <person name="Goswami T."/>
            <person name="Rad R."/>
            <person name="Beausoleil S.A."/>
            <person name="Villen J."/>
            <person name="Haas W."/>
            <person name="Sowa M.E."/>
            <person name="Gygi S.P."/>
        </authorList>
    </citation>
    <scope>PHOSPHORYLATION [LARGE SCALE ANALYSIS] AT SER-38; SER-221 AND SER-222</scope>
    <scope>IDENTIFICATION BY MASS SPECTROMETRY [LARGE SCALE ANALYSIS]</scope>
    <source>
        <tissue>Brain</tissue>
        <tissue>Brown adipose tissue</tissue>
        <tissue>Heart</tissue>
        <tissue>Kidney</tissue>
        <tissue>Liver</tissue>
        <tissue>Lung</tissue>
        <tissue>Pancreas</tissue>
        <tissue>Spleen</tissue>
        <tissue>Testis</tissue>
    </source>
</reference>
<reference key="7">
    <citation type="journal article" date="2022" name="Sci. Adv.">
        <title>AMPK-dependent phosphorylation of MTFR1L regulates mitochondrial morphology.</title>
        <authorList>
            <person name="Tilokani L."/>
            <person name="Russell F.M."/>
            <person name="Hamilton S."/>
            <person name="Virga D.M."/>
            <person name="Segawa M."/>
            <person name="Paupe V."/>
            <person name="Gruszczyk A.V."/>
            <person name="Protasoni M."/>
            <person name="Tabara L.C."/>
            <person name="Johnson M."/>
            <person name="Anand H."/>
            <person name="Murphy M.P."/>
            <person name="Hardie D.G."/>
            <person name="Polleux F."/>
            <person name="Prudent J."/>
        </authorList>
    </citation>
    <scope>FUNCTION</scope>
    <scope>SUBCELLULAR LOCATION</scope>
</reference>
<keyword id="KW-0025">Alternative splicing</keyword>
<keyword id="KW-0472">Membrane</keyword>
<keyword id="KW-0496">Mitochondrion</keyword>
<keyword id="KW-1000">Mitochondrion outer membrane</keyword>
<keyword id="KW-0597">Phosphoprotein</keyword>
<keyword id="KW-1185">Reference proteome</keyword>
<name>MFR1L_MOUSE</name>
<sequence>MEANVTIPIWQNKPHGAARSVVRRIGTNLPLKPCPRASFETLPNISDLCLKDVPPVPTLADIAWIAADEEETYARVRSDTRPLRHTWKPSPLIVMQRNASVPNLRGSEERLLALKKPALPALSRTTELQDELSHLRSQIAKIVAADAASASLTPDFFSSGSSNVSSPLPCFGSSLHSTTSFVISDITEETEVEVPELPTVPLLCSASPECCKPEHKTTCSSSEEDDCISLSKASSFADMMGILKDFHRIKQSQDLSRSLLKEEDPAVLISEVLRRKFALKEEDISRKGN</sequence>
<feature type="chain" id="PRO_0000341567" description="Mitochondrial fission regulator 1-like">
    <location>
        <begin position="1"/>
        <end position="289"/>
    </location>
</feature>
<feature type="modified residue" description="Phosphothreonine" evidence="1">
    <location>
        <position position="27"/>
    </location>
</feature>
<feature type="modified residue" description="Phosphoserine" evidence="6">
    <location>
        <position position="38"/>
    </location>
</feature>
<feature type="modified residue" description="Phosphoserine; by AMPK" evidence="5">
    <location>
        <position position="100"/>
    </location>
</feature>
<feature type="modified residue" description="Phosphoserine" evidence="1">
    <location>
        <position position="107"/>
    </location>
</feature>
<feature type="modified residue" description="Phosphoserine" evidence="6">
    <location>
        <position position="221"/>
    </location>
</feature>
<feature type="modified residue" description="Phosphoserine" evidence="6">
    <location>
        <position position="222"/>
    </location>
</feature>
<feature type="modified residue" description="Phosphoserine; by AMPK" evidence="1">
    <location>
        <position position="235"/>
    </location>
</feature>
<feature type="modified residue" description="Phosphoserine" evidence="1">
    <location>
        <position position="258"/>
    </location>
</feature>
<feature type="modified residue" description="Phosphoserine" evidence="1">
    <location>
        <position position="270"/>
    </location>
</feature>
<feature type="splice variant" id="VSP_034340" description="In isoform 2." evidence="3">
    <original>VMQRNASVPNLRGSEERLLALKKPALPALSRTTELQDELSHLRSQIAKIVAADAASASLTPDFFSSGSSNVSSPLPCFGSSLHSTTSFVISDITEETEVEVPELPTVPLLCSASPECCKPEHKTTCSSSEEDDCISLSKASSFADMMGILKDFHRIKQSQDLSRSLLKEEDPAVLISEVLRRKFALKEEDISRKGN</original>
    <variation>EIFFFHGLSPSRKEK</variation>
    <location>
        <begin position="94"/>
        <end position="289"/>
    </location>
</feature>
<feature type="sequence conflict" description="In Ref. 1; BAE27152." evidence="4" ref="1">
    <original>P</original>
    <variation>L</variation>
    <location>
        <position position="33"/>
    </location>
</feature>
<feature type="sequence conflict" description="In Ref. 1; BAE27152." evidence="4" ref="1">
    <original>S</original>
    <variation>Y</variation>
    <location>
        <position position="158"/>
    </location>
</feature>
<feature type="sequence conflict" description="In Ref. 1; BAE27152." evidence="4" ref="1">
    <original>E</original>
    <variation>K</variation>
    <location>
        <position position="188"/>
    </location>
</feature>
<proteinExistence type="evidence at protein level"/>
<dbReference type="EMBL" id="AK010825">
    <property type="protein sequence ID" value="BAB27207.1"/>
    <property type="molecule type" value="mRNA"/>
</dbReference>
<dbReference type="EMBL" id="AK089141">
    <property type="protein sequence ID" value="BAC40763.1"/>
    <property type="molecule type" value="mRNA"/>
</dbReference>
<dbReference type="EMBL" id="AK145362">
    <property type="protein sequence ID" value="BAE26389.1"/>
    <property type="molecule type" value="mRNA"/>
</dbReference>
<dbReference type="EMBL" id="AK146416">
    <property type="protein sequence ID" value="BAE27152.1"/>
    <property type="molecule type" value="mRNA"/>
</dbReference>
<dbReference type="EMBL" id="AK164004">
    <property type="protein sequence ID" value="BAE37584.1"/>
    <property type="molecule type" value="mRNA"/>
</dbReference>
<dbReference type="EMBL" id="AK169047">
    <property type="protein sequence ID" value="BAE40835.1"/>
    <property type="molecule type" value="mRNA"/>
</dbReference>
<dbReference type="EMBL" id="AK171703">
    <property type="protein sequence ID" value="BAE42619.1"/>
    <property type="molecule type" value="mRNA"/>
</dbReference>
<dbReference type="EMBL" id="BC026808">
    <property type="protein sequence ID" value="AAH26808.1"/>
    <property type="molecule type" value="mRNA"/>
</dbReference>
<dbReference type="CCDS" id="CCDS18775.1">
    <molecule id="Q9CWE0-1"/>
</dbReference>
<dbReference type="RefSeq" id="NP_001243041.1">
    <molecule id="Q9CWE0-1"/>
    <property type="nucleotide sequence ID" value="NM_001256112.1"/>
</dbReference>
<dbReference type="RefSeq" id="NP_001342116.1">
    <molecule id="Q9CWE0-1"/>
    <property type="nucleotide sequence ID" value="NM_001355187.1"/>
</dbReference>
<dbReference type="RefSeq" id="NP_001342117.1">
    <molecule id="Q9CWE0-1"/>
    <property type="nucleotide sequence ID" value="NM_001355188.1"/>
</dbReference>
<dbReference type="RefSeq" id="NP_084035.1">
    <molecule id="Q9CWE0-1"/>
    <property type="nucleotide sequence ID" value="NM_029759.4"/>
</dbReference>
<dbReference type="RefSeq" id="XP_006539319.1">
    <molecule id="Q9CWE0-1"/>
    <property type="nucleotide sequence ID" value="XM_006539256.2"/>
</dbReference>
<dbReference type="RefSeq" id="XP_006539320.1">
    <property type="nucleotide sequence ID" value="XM_006539257.2"/>
</dbReference>
<dbReference type="RefSeq" id="XP_006539321.1">
    <molecule id="Q9CWE0-1"/>
    <property type="nucleotide sequence ID" value="XM_006539258.3"/>
</dbReference>
<dbReference type="SMR" id="Q9CWE0"/>
<dbReference type="BioGRID" id="218339">
    <property type="interactions" value="6"/>
</dbReference>
<dbReference type="FunCoup" id="Q9CWE0">
    <property type="interactions" value="1308"/>
</dbReference>
<dbReference type="IntAct" id="Q9CWE0">
    <property type="interactions" value="2"/>
</dbReference>
<dbReference type="MINT" id="Q9CWE0"/>
<dbReference type="STRING" id="10090.ENSMUSP00000099609"/>
<dbReference type="GlyGen" id="Q9CWE0">
    <property type="glycosylation" value="3 sites, 2 N-linked glycans (2 sites), 1 O-linked glycan (1 site)"/>
</dbReference>
<dbReference type="iPTMnet" id="Q9CWE0"/>
<dbReference type="PhosphoSitePlus" id="Q9CWE0"/>
<dbReference type="SwissPalm" id="Q9CWE0"/>
<dbReference type="jPOST" id="Q9CWE0"/>
<dbReference type="PaxDb" id="10090-ENSMUSP00000099609"/>
<dbReference type="PeptideAtlas" id="Q9CWE0"/>
<dbReference type="ProteomicsDB" id="293460">
    <molecule id="Q9CWE0-1"/>
</dbReference>
<dbReference type="ProteomicsDB" id="293461">
    <molecule id="Q9CWE0-2"/>
</dbReference>
<dbReference type="Pumba" id="Q9CWE0"/>
<dbReference type="Antibodypedia" id="30499">
    <property type="antibodies" value="18 antibodies from 8 providers"/>
</dbReference>
<dbReference type="DNASU" id="76824"/>
<dbReference type="Ensembl" id="ENSMUST00000102550.10">
    <molecule id="Q9CWE0-1"/>
    <property type="protein sequence ID" value="ENSMUSP00000099609.4"/>
    <property type="gene ID" value="ENSMUSG00000046671.19"/>
</dbReference>
<dbReference type="Ensembl" id="ENSMUST00000116279.10">
    <molecule id="Q9CWE0-1"/>
    <property type="protein sequence ID" value="ENSMUSP00000111983.4"/>
    <property type="gene ID" value="ENSMUSG00000046671.19"/>
</dbReference>
<dbReference type="GeneID" id="76824"/>
<dbReference type="KEGG" id="mmu:76824"/>
<dbReference type="UCSC" id="uc008vfi.2">
    <molecule id="Q9CWE0-1"/>
    <property type="organism name" value="mouse"/>
</dbReference>
<dbReference type="AGR" id="MGI:1924074"/>
<dbReference type="CTD" id="56181"/>
<dbReference type="MGI" id="MGI:1924074">
    <property type="gene designation" value="Mtfr1l"/>
</dbReference>
<dbReference type="VEuPathDB" id="HostDB:ENSMUSG00000046671"/>
<dbReference type="eggNOG" id="ENOG502QRAC">
    <property type="taxonomic scope" value="Eukaryota"/>
</dbReference>
<dbReference type="GeneTree" id="ENSGT00950000183215"/>
<dbReference type="InParanoid" id="Q9CWE0"/>
<dbReference type="OMA" id="LRHKWKP"/>
<dbReference type="OrthoDB" id="9930891at2759"/>
<dbReference type="PhylomeDB" id="Q9CWE0"/>
<dbReference type="TreeFam" id="TF331404"/>
<dbReference type="BioGRID-ORCS" id="76824">
    <property type="hits" value="2 hits in 77 CRISPR screens"/>
</dbReference>
<dbReference type="CD-CODE" id="CE726F99">
    <property type="entry name" value="Postsynaptic density"/>
</dbReference>
<dbReference type="ChiTaRS" id="Mtfr1l">
    <property type="organism name" value="mouse"/>
</dbReference>
<dbReference type="PRO" id="PR:Q9CWE0"/>
<dbReference type="Proteomes" id="UP000000589">
    <property type="component" value="Chromosome 4"/>
</dbReference>
<dbReference type="RNAct" id="Q9CWE0">
    <property type="molecule type" value="protein"/>
</dbReference>
<dbReference type="Bgee" id="ENSMUSG00000046671">
    <property type="expression patterns" value="Expressed in embryonic brain and 253 other cell types or tissues"/>
</dbReference>
<dbReference type="ExpressionAtlas" id="Q9CWE0">
    <property type="expression patterns" value="baseline and differential"/>
</dbReference>
<dbReference type="GO" id="GO:0005741">
    <property type="term" value="C:mitochondrial outer membrane"/>
    <property type="evidence" value="ECO:0007669"/>
    <property type="project" value="UniProtKB-SubCell"/>
</dbReference>
<dbReference type="InterPro" id="IPR007972">
    <property type="entry name" value="Mtfr1"/>
</dbReference>
<dbReference type="PANTHER" id="PTHR14215:SF3">
    <property type="entry name" value="MITOCHONDRIAL FISSION REGULATOR 1-LIKE"/>
    <property type="match status" value="1"/>
</dbReference>
<dbReference type="PANTHER" id="PTHR14215">
    <property type="entry name" value="PROTEIN OF UNKNOWN FUNCTION DUF729"/>
    <property type="match status" value="1"/>
</dbReference>
<dbReference type="Pfam" id="PF05308">
    <property type="entry name" value="Mito_fiss_reg"/>
    <property type="match status" value="1"/>
</dbReference>
<organism>
    <name type="scientific">Mus musculus</name>
    <name type="common">Mouse</name>
    <dbReference type="NCBI Taxonomy" id="10090"/>
    <lineage>
        <taxon>Eukaryota</taxon>
        <taxon>Metazoa</taxon>
        <taxon>Chordata</taxon>
        <taxon>Craniata</taxon>
        <taxon>Vertebrata</taxon>
        <taxon>Euteleostomi</taxon>
        <taxon>Mammalia</taxon>
        <taxon>Eutheria</taxon>
        <taxon>Euarchontoglires</taxon>
        <taxon>Glires</taxon>
        <taxon>Rodentia</taxon>
        <taxon>Myomorpha</taxon>
        <taxon>Muroidea</taxon>
        <taxon>Muridae</taxon>
        <taxon>Murinae</taxon>
        <taxon>Mus</taxon>
        <taxon>Mus</taxon>
    </lineage>
</organism>